<dbReference type="EMBL" id="CP001657">
    <property type="protein sequence ID" value="ACT14831.1"/>
    <property type="molecule type" value="Genomic_DNA"/>
</dbReference>
<dbReference type="RefSeq" id="WP_005970274.1">
    <property type="nucleotide sequence ID" value="NC_012917.1"/>
</dbReference>
<dbReference type="SMR" id="C6DG68"/>
<dbReference type="STRING" id="561230.PC1_3816"/>
<dbReference type="GeneID" id="93391974"/>
<dbReference type="KEGG" id="pct:PC1_3816"/>
<dbReference type="eggNOG" id="COG0092">
    <property type="taxonomic scope" value="Bacteria"/>
</dbReference>
<dbReference type="HOGENOM" id="CLU_058591_0_2_6"/>
<dbReference type="OrthoDB" id="9806396at2"/>
<dbReference type="Proteomes" id="UP000002736">
    <property type="component" value="Chromosome"/>
</dbReference>
<dbReference type="GO" id="GO:0022627">
    <property type="term" value="C:cytosolic small ribosomal subunit"/>
    <property type="evidence" value="ECO:0007669"/>
    <property type="project" value="TreeGrafter"/>
</dbReference>
<dbReference type="GO" id="GO:0003729">
    <property type="term" value="F:mRNA binding"/>
    <property type="evidence" value="ECO:0007669"/>
    <property type="project" value="UniProtKB-UniRule"/>
</dbReference>
<dbReference type="GO" id="GO:0019843">
    <property type="term" value="F:rRNA binding"/>
    <property type="evidence" value="ECO:0007669"/>
    <property type="project" value="UniProtKB-UniRule"/>
</dbReference>
<dbReference type="GO" id="GO:0003735">
    <property type="term" value="F:structural constituent of ribosome"/>
    <property type="evidence" value="ECO:0007669"/>
    <property type="project" value="InterPro"/>
</dbReference>
<dbReference type="GO" id="GO:0006412">
    <property type="term" value="P:translation"/>
    <property type="evidence" value="ECO:0007669"/>
    <property type="project" value="UniProtKB-UniRule"/>
</dbReference>
<dbReference type="CDD" id="cd02412">
    <property type="entry name" value="KH-II_30S_S3"/>
    <property type="match status" value="1"/>
</dbReference>
<dbReference type="FunFam" id="3.30.1140.32:FF:000001">
    <property type="entry name" value="30S ribosomal protein S3"/>
    <property type="match status" value="1"/>
</dbReference>
<dbReference type="FunFam" id="3.30.300.20:FF:000001">
    <property type="entry name" value="30S ribosomal protein S3"/>
    <property type="match status" value="1"/>
</dbReference>
<dbReference type="Gene3D" id="3.30.300.20">
    <property type="match status" value="1"/>
</dbReference>
<dbReference type="Gene3D" id="3.30.1140.32">
    <property type="entry name" value="Ribosomal protein S3, C-terminal domain"/>
    <property type="match status" value="1"/>
</dbReference>
<dbReference type="HAMAP" id="MF_01309_B">
    <property type="entry name" value="Ribosomal_uS3_B"/>
    <property type="match status" value="1"/>
</dbReference>
<dbReference type="InterPro" id="IPR004087">
    <property type="entry name" value="KH_dom"/>
</dbReference>
<dbReference type="InterPro" id="IPR015946">
    <property type="entry name" value="KH_dom-like_a/b"/>
</dbReference>
<dbReference type="InterPro" id="IPR004044">
    <property type="entry name" value="KH_dom_type_2"/>
</dbReference>
<dbReference type="InterPro" id="IPR009019">
    <property type="entry name" value="KH_sf_prok-type"/>
</dbReference>
<dbReference type="InterPro" id="IPR036419">
    <property type="entry name" value="Ribosomal_S3_C_sf"/>
</dbReference>
<dbReference type="InterPro" id="IPR005704">
    <property type="entry name" value="Ribosomal_uS3_bac-typ"/>
</dbReference>
<dbReference type="InterPro" id="IPR001351">
    <property type="entry name" value="Ribosomal_uS3_C"/>
</dbReference>
<dbReference type="InterPro" id="IPR018280">
    <property type="entry name" value="Ribosomal_uS3_CS"/>
</dbReference>
<dbReference type="NCBIfam" id="TIGR01009">
    <property type="entry name" value="rpsC_bact"/>
    <property type="match status" value="1"/>
</dbReference>
<dbReference type="PANTHER" id="PTHR11760">
    <property type="entry name" value="30S/40S RIBOSOMAL PROTEIN S3"/>
    <property type="match status" value="1"/>
</dbReference>
<dbReference type="PANTHER" id="PTHR11760:SF19">
    <property type="entry name" value="SMALL RIBOSOMAL SUBUNIT PROTEIN US3C"/>
    <property type="match status" value="1"/>
</dbReference>
<dbReference type="Pfam" id="PF07650">
    <property type="entry name" value="KH_2"/>
    <property type="match status" value="1"/>
</dbReference>
<dbReference type="Pfam" id="PF00189">
    <property type="entry name" value="Ribosomal_S3_C"/>
    <property type="match status" value="1"/>
</dbReference>
<dbReference type="SMART" id="SM00322">
    <property type="entry name" value="KH"/>
    <property type="match status" value="1"/>
</dbReference>
<dbReference type="SUPFAM" id="SSF54814">
    <property type="entry name" value="Prokaryotic type KH domain (KH-domain type II)"/>
    <property type="match status" value="1"/>
</dbReference>
<dbReference type="SUPFAM" id="SSF54821">
    <property type="entry name" value="Ribosomal protein S3 C-terminal domain"/>
    <property type="match status" value="1"/>
</dbReference>
<dbReference type="PROSITE" id="PS50823">
    <property type="entry name" value="KH_TYPE_2"/>
    <property type="match status" value="1"/>
</dbReference>
<dbReference type="PROSITE" id="PS00548">
    <property type="entry name" value="RIBOSOMAL_S3"/>
    <property type="match status" value="1"/>
</dbReference>
<accession>C6DG68</accession>
<protein>
    <recommendedName>
        <fullName evidence="1">Small ribosomal subunit protein uS3</fullName>
    </recommendedName>
    <alternativeName>
        <fullName evidence="2">30S ribosomal protein S3</fullName>
    </alternativeName>
</protein>
<feature type="chain" id="PRO_1000214346" description="Small ribosomal subunit protein uS3">
    <location>
        <begin position="1"/>
        <end position="233"/>
    </location>
</feature>
<feature type="domain" description="KH type-2" evidence="1">
    <location>
        <begin position="39"/>
        <end position="107"/>
    </location>
</feature>
<comment type="function">
    <text evidence="1">Binds the lower part of the 30S subunit head. Binds mRNA in the 70S ribosome, positioning it for translation.</text>
</comment>
<comment type="subunit">
    <text evidence="1">Part of the 30S ribosomal subunit. Forms a tight complex with proteins S10 and S14.</text>
</comment>
<comment type="similarity">
    <text evidence="1">Belongs to the universal ribosomal protein uS3 family.</text>
</comment>
<name>RS3_PECCP</name>
<proteinExistence type="inferred from homology"/>
<evidence type="ECO:0000255" key="1">
    <source>
        <dbReference type="HAMAP-Rule" id="MF_01309"/>
    </source>
</evidence>
<evidence type="ECO:0000305" key="2"/>
<gene>
    <name evidence="1" type="primary">rpsC</name>
    <name type="ordered locus">PC1_3816</name>
</gene>
<reference key="1">
    <citation type="submission" date="2009-07" db="EMBL/GenBank/DDBJ databases">
        <title>Complete sequence of Pectobacterium carotovorum subsp. carotovorum PC1.</title>
        <authorList>
            <consortium name="US DOE Joint Genome Institute"/>
            <person name="Lucas S."/>
            <person name="Copeland A."/>
            <person name="Lapidus A."/>
            <person name="Glavina del Rio T."/>
            <person name="Tice H."/>
            <person name="Bruce D."/>
            <person name="Goodwin L."/>
            <person name="Pitluck S."/>
            <person name="Munk A.C."/>
            <person name="Brettin T."/>
            <person name="Detter J.C."/>
            <person name="Han C."/>
            <person name="Tapia R."/>
            <person name="Larimer F."/>
            <person name="Land M."/>
            <person name="Hauser L."/>
            <person name="Kyrpides N."/>
            <person name="Mikhailova N."/>
            <person name="Balakrishnan V."/>
            <person name="Glasner J."/>
            <person name="Perna N.T."/>
        </authorList>
    </citation>
    <scope>NUCLEOTIDE SEQUENCE [LARGE SCALE GENOMIC DNA]</scope>
    <source>
        <strain>PC1</strain>
    </source>
</reference>
<keyword id="KW-0687">Ribonucleoprotein</keyword>
<keyword id="KW-0689">Ribosomal protein</keyword>
<keyword id="KW-0694">RNA-binding</keyword>
<keyword id="KW-0699">rRNA-binding</keyword>
<sequence>MGQKVHPNGIRLGIVKPWNSTWYANTKEFADNLDSDFKVRKYLTKELEKASVSRIVIERPAKSIRVTIHTARPGIVIGKKGEDVEKLRKVVADIAGVPAQINIAEVRKPELDAKLVADSITSQLERRVMFRRAMKRAVQNAMRLGAKGIKVEVSGRLGGAEIARTEWYREGRVPLHTLRADIDYNTSEAHTTYGVIGVKVWIFKGEILGGMAAVEQPEKPAAQPKKQQRKGRK</sequence>
<organism>
    <name type="scientific">Pectobacterium carotovorum subsp. carotovorum (strain PC1)</name>
    <dbReference type="NCBI Taxonomy" id="561230"/>
    <lineage>
        <taxon>Bacteria</taxon>
        <taxon>Pseudomonadati</taxon>
        <taxon>Pseudomonadota</taxon>
        <taxon>Gammaproteobacteria</taxon>
        <taxon>Enterobacterales</taxon>
        <taxon>Pectobacteriaceae</taxon>
        <taxon>Pectobacterium</taxon>
    </lineage>
</organism>